<accession>P38419</accession>
<accession>Q6YVT0</accession>
<accession>Q9XHM7</accession>
<dbReference type="EC" id="1.13.11.12"/>
<dbReference type="EMBL" id="D14000">
    <property type="protein sequence ID" value="BAA03102.1"/>
    <property type="molecule type" value="mRNA"/>
</dbReference>
<dbReference type="EMBL" id="AF095895">
    <property type="protein sequence ID" value="AAD39093.1"/>
    <property type="molecule type" value="mRNA"/>
</dbReference>
<dbReference type="EMBL" id="AP005816">
    <property type="protein sequence ID" value="BAD10665.1"/>
    <property type="molecule type" value="Genomic_DNA"/>
</dbReference>
<dbReference type="EMBL" id="AP014964">
    <property type="protein sequence ID" value="BAT06178.1"/>
    <property type="molecule type" value="Genomic_DNA"/>
</dbReference>
<dbReference type="RefSeq" id="XP_015650717.1">
    <property type="nucleotide sequence ID" value="XM_015795231.1"/>
</dbReference>
<dbReference type="SMR" id="P38419"/>
<dbReference type="FunCoup" id="P38419">
    <property type="interactions" value="211"/>
</dbReference>
<dbReference type="STRING" id="39947.P38419"/>
<dbReference type="PaxDb" id="39947-P38419"/>
<dbReference type="EnsemblPlants" id="Os08t0508800-01">
    <property type="protein sequence ID" value="Os08t0508800-01"/>
    <property type="gene ID" value="Os08g0508800"/>
</dbReference>
<dbReference type="Gramene" id="Os08t0508800-01">
    <property type="protein sequence ID" value="Os08t0508800-01"/>
    <property type="gene ID" value="Os08g0508800"/>
</dbReference>
<dbReference type="eggNOG" id="ENOG502QQSP">
    <property type="taxonomic scope" value="Eukaryota"/>
</dbReference>
<dbReference type="HOGENOM" id="CLU_004282_0_0_1"/>
<dbReference type="InParanoid" id="P38419"/>
<dbReference type="OMA" id="ANIQSRH"/>
<dbReference type="OrthoDB" id="407298at2759"/>
<dbReference type="BioCyc" id="MetaCyc:MONOMER-16718"/>
<dbReference type="BRENDA" id="1.13.11.12">
    <property type="organism ID" value="4460"/>
</dbReference>
<dbReference type="PlantReactome" id="R-OSA-1119332">
    <property type="pathway name" value="Jasmonic acid biosynthesis"/>
</dbReference>
<dbReference type="PlantReactome" id="R-OSA-1119566">
    <property type="pathway name" value="Divinyl ether biosynthesis II (13-LOX)"/>
</dbReference>
<dbReference type="PlantReactome" id="R-OSA-1119618">
    <property type="pathway name" value="13-LOX and 13-HPL pathway"/>
</dbReference>
<dbReference type="UniPathway" id="UPA00382"/>
<dbReference type="Proteomes" id="UP000000763">
    <property type="component" value="Chromosome 8"/>
</dbReference>
<dbReference type="Proteomes" id="UP000059680">
    <property type="component" value="Chromosome 8"/>
</dbReference>
<dbReference type="ExpressionAtlas" id="P38419">
    <property type="expression patterns" value="baseline and differential"/>
</dbReference>
<dbReference type="GO" id="GO:0009507">
    <property type="term" value="C:chloroplast"/>
    <property type="evidence" value="ECO:0007669"/>
    <property type="project" value="UniProtKB-SubCell"/>
</dbReference>
<dbReference type="GO" id="GO:0016165">
    <property type="term" value="F:linoleate 13S-lipoxygenase activity"/>
    <property type="evidence" value="ECO:0007669"/>
    <property type="project" value="UniProtKB-EC"/>
</dbReference>
<dbReference type="GO" id="GO:0046872">
    <property type="term" value="F:metal ion binding"/>
    <property type="evidence" value="ECO:0007669"/>
    <property type="project" value="UniProtKB-KW"/>
</dbReference>
<dbReference type="GO" id="GO:0016702">
    <property type="term" value="F:oxidoreductase activity, acting on single donors with incorporation of molecular oxygen, incorporation of two atoms of oxygen"/>
    <property type="evidence" value="ECO:0000318"/>
    <property type="project" value="GO_Central"/>
</dbReference>
<dbReference type="GO" id="GO:0016166">
    <property type="term" value="F:phytoene dehydrogenase activity"/>
    <property type="evidence" value="ECO:0000314"/>
    <property type="project" value="Gramene"/>
</dbReference>
<dbReference type="GO" id="GO:0006633">
    <property type="term" value="P:fatty acid biosynthetic process"/>
    <property type="evidence" value="ECO:0007669"/>
    <property type="project" value="UniProtKB-KW"/>
</dbReference>
<dbReference type="GO" id="GO:0034440">
    <property type="term" value="P:lipid oxidation"/>
    <property type="evidence" value="ECO:0000318"/>
    <property type="project" value="GO_Central"/>
</dbReference>
<dbReference type="GO" id="GO:0031408">
    <property type="term" value="P:oxylipin biosynthetic process"/>
    <property type="evidence" value="ECO:0007669"/>
    <property type="project" value="UniProtKB-UniPathway"/>
</dbReference>
<dbReference type="GO" id="GO:0051707">
    <property type="term" value="P:response to other organism"/>
    <property type="evidence" value="ECO:0000314"/>
    <property type="project" value="Gramene"/>
</dbReference>
<dbReference type="GO" id="GO:0009611">
    <property type="term" value="P:response to wounding"/>
    <property type="evidence" value="ECO:0000314"/>
    <property type="project" value="Gramene"/>
</dbReference>
<dbReference type="CDD" id="cd01751">
    <property type="entry name" value="PLAT_LH2"/>
    <property type="match status" value="1"/>
</dbReference>
<dbReference type="FunFam" id="1.20.245.10:FF:000002">
    <property type="entry name" value="Lipoxygenase"/>
    <property type="match status" value="1"/>
</dbReference>
<dbReference type="FunFam" id="3.10.450.60:FF:000005">
    <property type="entry name" value="Lipoxygenase"/>
    <property type="match status" value="1"/>
</dbReference>
<dbReference type="FunFam" id="4.10.375.10:FF:000001">
    <property type="entry name" value="Lipoxygenase"/>
    <property type="match status" value="1"/>
</dbReference>
<dbReference type="Gene3D" id="3.10.450.60">
    <property type="match status" value="1"/>
</dbReference>
<dbReference type="Gene3D" id="4.10.375.10">
    <property type="entry name" value="Lipoxygenase-1, Domain 2"/>
    <property type="match status" value="1"/>
</dbReference>
<dbReference type="Gene3D" id="4.10.372.10">
    <property type="entry name" value="Lipoxygenase-1, Domain 3"/>
    <property type="match status" value="1"/>
</dbReference>
<dbReference type="Gene3D" id="1.20.245.10">
    <property type="entry name" value="Lipoxygenase-1, Domain 5"/>
    <property type="match status" value="1"/>
</dbReference>
<dbReference type="Gene3D" id="2.60.60.20">
    <property type="entry name" value="PLAT/LH2 domain"/>
    <property type="match status" value="1"/>
</dbReference>
<dbReference type="InterPro" id="IPR000907">
    <property type="entry name" value="LipOase"/>
</dbReference>
<dbReference type="InterPro" id="IPR013819">
    <property type="entry name" value="LipOase_C"/>
</dbReference>
<dbReference type="InterPro" id="IPR036226">
    <property type="entry name" value="LipOase_C_sf"/>
</dbReference>
<dbReference type="InterPro" id="IPR020834">
    <property type="entry name" value="LipOase_CS"/>
</dbReference>
<dbReference type="InterPro" id="IPR020833">
    <property type="entry name" value="LipOase_Fe_BS"/>
</dbReference>
<dbReference type="InterPro" id="IPR001246">
    <property type="entry name" value="LipOase_plant"/>
</dbReference>
<dbReference type="InterPro" id="IPR042057">
    <property type="entry name" value="Lipoxy_PLAT/LH2"/>
</dbReference>
<dbReference type="InterPro" id="IPR027433">
    <property type="entry name" value="Lipoxygenase_dom_3"/>
</dbReference>
<dbReference type="InterPro" id="IPR001024">
    <property type="entry name" value="PLAT/LH2_dom"/>
</dbReference>
<dbReference type="InterPro" id="IPR036392">
    <property type="entry name" value="PLAT/LH2_dom_sf"/>
</dbReference>
<dbReference type="PANTHER" id="PTHR11771">
    <property type="entry name" value="LIPOXYGENASE"/>
    <property type="match status" value="1"/>
</dbReference>
<dbReference type="Pfam" id="PF00305">
    <property type="entry name" value="Lipoxygenase"/>
    <property type="match status" value="1"/>
</dbReference>
<dbReference type="Pfam" id="PF01477">
    <property type="entry name" value="PLAT"/>
    <property type="match status" value="1"/>
</dbReference>
<dbReference type="PRINTS" id="PR00087">
    <property type="entry name" value="LIPOXYGENASE"/>
</dbReference>
<dbReference type="PRINTS" id="PR00468">
    <property type="entry name" value="PLTLPOXGNASE"/>
</dbReference>
<dbReference type="SMART" id="SM00308">
    <property type="entry name" value="LH2"/>
    <property type="match status" value="1"/>
</dbReference>
<dbReference type="SUPFAM" id="SSF49723">
    <property type="entry name" value="Lipase/lipooxygenase domain (PLAT/LH2 domain)"/>
    <property type="match status" value="1"/>
</dbReference>
<dbReference type="SUPFAM" id="SSF48484">
    <property type="entry name" value="Lipoxigenase"/>
    <property type="match status" value="1"/>
</dbReference>
<dbReference type="PROSITE" id="PS00711">
    <property type="entry name" value="LIPOXYGENASE_1"/>
    <property type="match status" value="1"/>
</dbReference>
<dbReference type="PROSITE" id="PS00081">
    <property type="entry name" value="LIPOXYGENASE_2"/>
    <property type="match status" value="1"/>
</dbReference>
<dbReference type="PROSITE" id="PS51393">
    <property type="entry name" value="LIPOXYGENASE_3"/>
    <property type="match status" value="1"/>
</dbReference>
<dbReference type="PROSITE" id="PS50095">
    <property type="entry name" value="PLAT"/>
    <property type="match status" value="1"/>
</dbReference>
<sequence>MLRPQLNPSSHTTTTSSSSSTQLFASSSCIASLRRPSSSSSSVVAAARRTRGQGSSRVVVVCASSSATASRGDSSSDMAAAAAVRVKAVATIKVTVGELINRSIDIRDLIGRSLSLELVSSELDAKTGKEKATVRSYAHNVDDDDHSVVTYEADFDVPSGFGPIGAIIVTNELRQEMFLEDINLTASDGAGNSTVLPIRCNSWVQPKSVGDEGTPSKRIFFANKTYLPGQTPAGLRSYRKNDLQQKRGDGTGEREADDRVYDYDVYNDLGNPDSNGDLARPVLGGNKQFPYPRRCRTGRPPSKKDPKSETRKGNVYVPRDEEFSPEKEDYFLRKTVGSVLQAAVPAAQSLLLDKLKWNLPFPSFFVIDKLFEDGVELPGVDKLNFLESVVPRLLEHLRDTPAEKILRFETPANIQKDKFAWLRDEEFARETLAGINPYAIELVREFPLKSKLDPAVYGPAESAITADLLEEQMRRVMTVEEAISQKRLFMLDFHDLFLPYVHKIRSLDHTTMYGSRTVFFLTDDGTLQLLAIELTRPASPSQPQWRQVFTPSTDATMSWLWRMAKAHVRAHDAGHHELITHWLRTHCAVEPYIIAANRQLSEMHPIYQLLRPHFRYTMRINARARSALISAGGIIERSFSPQKYSMELSSVAYDKLWRFDTEALPADLVRRGMAEEDPTAEHGLKLAIEDYPFANDGLLIWDAIKTWVQAYVARFYPDADSVAGDEELQAFWTEVRTKGHGDKKDAPWWPKLDSPESLAHTLTTIVWVAAAHHAAVNFGQYDFGGYFPNRPSIARTVMPVEEPVDGAAMERFLDNPDQALRECFPSQVQATVVMAVLDVLSSHSTDEEYLGGEQTRPWNSDAAVQAAYDGFAARLKEIEGVIDGRNKDRKLKNRCGAGILPYQLMKPFSDSGVTGMGIPNSTSI</sequence>
<keyword id="KW-0150">Chloroplast</keyword>
<keyword id="KW-0223">Dioxygenase</keyword>
<keyword id="KW-0275">Fatty acid biosynthesis</keyword>
<keyword id="KW-0276">Fatty acid metabolism</keyword>
<keyword id="KW-0408">Iron</keyword>
<keyword id="KW-0444">Lipid biosynthesis</keyword>
<keyword id="KW-0443">Lipid metabolism</keyword>
<keyword id="KW-0479">Metal-binding</keyword>
<keyword id="KW-0560">Oxidoreductase</keyword>
<keyword id="KW-0925">Oxylipin biosynthesis</keyword>
<keyword id="KW-0934">Plastid</keyword>
<keyword id="KW-1185">Reference proteome</keyword>
<keyword id="KW-0809">Transit peptide</keyword>
<feature type="transit peptide" description="Chloroplast" evidence="1">
    <location>
        <begin position="1"/>
        <end position="61"/>
    </location>
</feature>
<feature type="chain" id="PRO_0000018327" description="Lipoxygenase 7, chloroplastic">
    <location>
        <begin position="62"/>
        <end position="924"/>
    </location>
</feature>
<feature type="domain" description="PLAT" evidence="2">
    <location>
        <begin position="88"/>
        <end position="218"/>
    </location>
</feature>
<feature type="domain" description="Lipoxygenase" evidence="3">
    <location>
        <begin position="225"/>
        <end position="924"/>
    </location>
</feature>
<feature type="region of interest" description="Disordered" evidence="4">
    <location>
        <begin position="231"/>
        <end position="315"/>
    </location>
</feature>
<feature type="compositionally biased region" description="Basic and acidic residues" evidence="4">
    <location>
        <begin position="239"/>
        <end position="262"/>
    </location>
</feature>
<feature type="compositionally biased region" description="Basic and acidic residues" evidence="4">
    <location>
        <begin position="302"/>
        <end position="315"/>
    </location>
</feature>
<feature type="binding site" evidence="3">
    <location>
        <position position="581"/>
    </location>
    <ligand>
        <name>Fe cation</name>
        <dbReference type="ChEBI" id="CHEBI:24875"/>
        <note>catalytic</note>
    </ligand>
</feature>
<feature type="binding site" evidence="3">
    <location>
        <position position="586"/>
    </location>
    <ligand>
        <name>Fe cation</name>
        <dbReference type="ChEBI" id="CHEBI:24875"/>
        <note>catalytic</note>
    </ligand>
</feature>
<feature type="binding site" evidence="3">
    <location>
        <position position="773"/>
    </location>
    <ligand>
        <name>Fe cation</name>
        <dbReference type="ChEBI" id="CHEBI:24875"/>
        <note>catalytic</note>
    </ligand>
</feature>
<feature type="binding site" evidence="3">
    <location>
        <position position="777"/>
    </location>
    <ligand>
        <name>Fe cation</name>
        <dbReference type="ChEBI" id="CHEBI:24875"/>
        <note>catalytic</note>
    </ligand>
</feature>
<feature type="binding site" evidence="3">
    <location>
        <position position="924"/>
    </location>
    <ligand>
        <name>Fe cation</name>
        <dbReference type="ChEBI" id="CHEBI:24875"/>
        <note>catalytic</note>
    </ligand>
</feature>
<feature type="sequence conflict" description="In Ref. 1; AAD39093." evidence="6" ref="1">
    <original>D</original>
    <variation>E</variation>
    <location>
        <position position="143"/>
    </location>
</feature>
<feature type="sequence conflict" description="In Ref. 1; AAD39093." evidence="6" ref="1">
    <original>AA</original>
    <variation>P</variation>
    <location>
        <begin position="342"/>
        <end position="343"/>
    </location>
</feature>
<feature type="sequence conflict" description="In Ref. 1; BAA03102." evidence="6" ref="1">
    <original>LLL</original>
    <variation>CSS</variation>
    <location>
        <begin position="350"/>
        <end position="352"/>
    </location>
</feature>
<feature type="sequence conflict" description="In Ref. 1; AAD39093." evidence="6" ref="1">
    <original>S</original>
    <variation>T</variation>
    <location>
        <position position="450"/>
    </location>
</feature>
<feature type="sequence conflict" description="In Ref. 1; BAA03102." evidence="6" ref="1">
    <original>S</original>
    <variation>N</variation>
    <location>
        <position position="484"/>
    </location>
</feature>
<feature type="sequence conflict" description="In Ref. 1; BAA03102." evidence="6" ref="1">
    <original>P</original>
    <variation>L</variation>
    <location>
        <position position="540"/>
    </location>
</feature>
<feature type="sequence conflict" description="In Ref. 1; BAA03102." evidence="6" ref="1">
    <original>RSAL</original>
    <variation>ARV</variation>
    <location>
        <begin position="625"/>
        <end position="628"/>
    </location>
</feature>
<feature type="sequence conflict" description="In Ref. 1; BAA03102." evidence="6" ref="1">
    <original>H</original>
    <variation>Q</variation>
    <location>
        <position position="682"/>
    </location>
</feature>
<feature type="sequence conflict" description="In Ref. 1; BAA03102." evidence="6" ref="1">
    <original>T</original>
    <variation>N</variation>
    <location>
        <position position="764"/>
    </location>
</feature>
<feature type="sequence conflict" description="In Ref. 1; AAD39093." evidence="6" ref="1">
    <original>A</original>
    <variation>R</variation>
    <location>
        <position position="819"/>
    </location>
</feature>
<feature type="sequence conflict" description="In Ref. 1; BAA03102." evidence="6" ref="1">
    <original>WNSDAAV</original>
    <variation>GTATRRL</variation>
    <location>
        <begin position="858"/>
        <end position="864"/>
    </location>
</feature>
<organism>
    <name type="scientific">Oryza sativa subsp. japonica</name>
    <name type="common">Rice</name>
    <dbReference type="NCBI Taxonomy" id="39947"/>
    <lineage>
        <taxon>Eukaryota</taxon>
        <taxon>Viridiplantae</taxon>
        <taxon>Streptophyta</taxon>
        <taxon>Embryophyta</taxon>
        <taxon>Tracheophyta</taxon>
        <taxon>Spermatophyta</taxon>
        <taxon>Magnoliopsida</taxon>
        <taxon>Liliopsida</taxon>
        <taxon>Poales</taxon>
        <taxon>Poaceae</taxon>
        <taxon>BOP clade</taxon>
        <taxon>Oryzoideae</taxon>
        <taxon>Oryzeae</taxon>
        <taxon>Oryzinae</taxon>
        <taxon>Oryza</taxon>
        <taxon>Oryza sativa</taxon>
    </lineage>
</organism>
<proteinExistence type="evidence at transcript level"/>
<name>LOXC1_ORYSJ</name>
<reference key="1">
    <citation type="journal article" date="1994" name="J. Biol. Chem.">
        <title>A novel lipoxygenase from rice. Primary structure and specific expression upon incompatible infection with rice blast fungus.</title>
        <authorList>
            <person name="Peng Y.L."/>
            <person name="Shirano Y."/>
            <person name="Ohta H."/>
            <person name="Hibino T."/>
            <person name="Tanaka K."/>
            <person name="Shibata D."/>
        </authorList>
    </citation>
    <scope>NUCLEOTIDE SEQUENCE [MRNA]</scope>
    <scope>FUNCTION</scope>
    <source>
        <strain>cv. Aichi asahi</strain>
        <tissue>Leaf</tissue>
    </source>
</reference>
<reference key="2">
    <citation type="journal article" date="2005" name="Nature">
        <title>The map-based sequence of the rice genome.</title>
        <authorList>
            <consortium name="International rice genome sequencing project (IRGSP)"/>
        </authorList>
    </citation>
    <scope>NUCLEOTIDE SEQUENCE [LARGE SCALE GENOMIC DNA]</scope>
    <source>
        <strain>cv. Nipponbare</strain>
    </source>
</reference>
<reference key="3">
    <citation type="journal article" date="2013" name="Rice">
        <title>Improvement of the Oryza sativa Nipponbare reference genome using next generation sequence and optical map data.</title>
        <authorList>
            <person name="Kawahara Y."/>
            <person name="de la Bastide M."/>
            <person name="Hamilton J.P."/>
            <person name="Kanamori H."/>
            <person name="McCombie W.R."/>
            <person name="Ouyang S."/>
            <person name="Schwartz D.C."/>
            <person name="Tanaka T."/>
            <person name="Wu J."/>
            <person name="Zhou S."/>
            <person name="Childs K.L."/>
            <person name="Davidson R.M."/>
            <person name="Lin H."/>
            <person name="Quesada-Ocampo L."/>
            <person name="Vaillancourt B."/>
            <person name="Sakai H."/>
            <person name="Lee S.S."/>
            <person name="Kim J."/>
            <person name="Numa H."/>
            <person name="Itoh T."/>
            <person name="Buell C.R."/>
            <person name="Matsumoto T."/>
        </authorList>
    </citation>
    <scope>GENOME REANNOTATION</scope>
    <source>
        <strain>cv. Nipponbare</strain>
    </source>
</reference>
<gene>
    <name type="primary">CM-LOX1</name>
    <name type="synonym">LOX2.1</name>
    <name type="ordered locus">Os08g0508800</name>
    <name type="ordered locus">LOC_Os08g39840</name>
    <name type="ORF">B1168A08.24</name>
</gene>
<protein>
    <recommendedName>
        <fullName>Lipoxygenase 7, chloroplastic</fullName>
        <ecNumber>1.13.11.12</ecNumber>
    </recommendedName>
</protein>
<comment type="function">
    <text evidence="5">Plant lipoxygenase may be involved in a number of diverse aspects of plant physiology including growth and development, pest resistance, and senescence or responses to wounding. This lipoxygenase introduces molecular oxygen exclusively into the C-13 position of linoleic and linolenic acids.</text>
</comment>
<comment type="catalytic activity">
    <reaction>
        <text>(9Z,12Z)-octadecadienoate + O2 = (13S)-hydroperoxy-(9Z,11E)-octadecadienoate</text>
        <dbReference type="Rhea" id="RHEA:22780"/>
        <dbReference type="ChEBI" id="CHEBI:15379"/>
        <dbReference type="ChEBI" id="CHEBI:30245"/>
        <dbReference type="ChEBI" id="CHEBI:57466"/>
        <dbReference type="EC" id="1.13.11.12"/>
    </reaction>
</comment>
<comment type="catalytic activity">
    <reaction>
        <text>(9Z,12Z,15Z)-octadecatrienoate + O2 = (13S)-hydroperoxy-(9Z,11E,15Z)-octadecatrienoate</text>
        <dbReference type="Rhea" id="RHEA:34495"/>
        <dbReference type="ChEBI" id="CHEBI:15379"/>
        <dbReference type="ChEBI" id="CHEBI:32387"/>
        <dbReference type="ChEBI" id="CHEBI:58757"/>
        <dbReference type="EC" id="1.13.11.12"/>
    </reaction>
</comment>
<comment type="cofactor">
    <cofactor evidence="3">
        <name>Fe cation</name>
        <dbReference type="ChEBI" id="CHEBI:24875"/>
    </cofactor>
    <text evidence="3">Binds 1 Fe cation per subunit. Iron is tightly bound.</text>
</comment>
<comment type="pathway">
    <text evidence="3">Lipid metabolism; oxylipin biosynthesis.</text>
</comment>
<comment type="subcellular location">
    <subcellularLocation>
        <location evidence="6">Plastid</location>
        <location evidence="6">Chloroplast</location>
    </subcellularLocation>
</comment>
<comment type="induction">
    <text>By fungal infection.</text>
</comment>
<comment type="similarity">
    <text evidence="6">Belongs to the lipoxygenase family.</text>
</comment>
<evidence type="ECO:0000255" key="1"/>
<evidence type="ECO:0000255" key="2">
    <source>
        <dbReference type="PROSITE-ProRule" id="PRU00152"/>
    </source>
</evidence>
<evidence type="ECO:0000255" key="3">
    <source>
        <dbReference type="PROSITE-ProRule" id="PRU00726"/>
    </source>
</evidence>
<evidence type="ECO:0000256" key="4">
    <source>
        <dbReference type="SAM" id="MobiDB-lite"/>
    </source>
</evidence>
<evidence type="ECO:0000269" key="5">
    <source>
    </source>
</evidence>
<evidence type="ECO:0000305" key="6"/>